<keyword id="KW-1003">Cell membrane</keyword>
<keyword id="KW-0407">Ion channel</keyword>
<keyword id="KW-0406">Ion transport</keyword>
<keyword id="KW-0472">Membrane</keyword>
<keyword id="KW-0812">Transmembrane</keyword>
<keyword id="KW-1133">Transmembrane helix</keyword>
<keyword id="KW-0813">Transport</keyword>
<feature type="chain" id="PRO_1000137208" description="Putative ion-transport protein YfeO">
    <location>
        <begin position="1"/>
        <end position="418"/>
    </location>
</feature>
<feature type="transmembrane region" description="Helical" evidence="1">
    <location>
        <begin position="10"/>
        <end position="30"/>
    </location>
</feature>
<feature type="transmembrane region" description="Helical" evidence="1">
    <location>
        <begin position="54"/>
        <end position="74"/>
    </location>
</feature>
<feature type="transmembrane region" description="Helical" evidence="1">
    <location>
        <begin position="99"/>
        <end position="119"/>
    </location>
</feature>
<feature type="transmembrane region" description="Helical" evidence="1">
    <location>
        <begin position="120"/>
        <end position="140"/>
    </location>
</feature>
<feature type="transmembrane region" description="Helical" evidence="1">
    <location>
        <begin position="149"/>
        <end position="169"/>
    </location>
</feature>
<feature type="transmembrane region" description="Helical" evidence="1">
    <location>
        <begin position="186"/>
        <end position="206"/>
    </location>
</feature>
<feature type="transmembrane region" description="Helical" evidence="1">
    <location>
        <begin position="223"/>
        <end position="243"/>
    </location>
</feature>
<feature type="transmembrane region" description="Helical" evidence="1">
    <location>
        <begin position="258"/>
        <end position="278"/>
    </location>
</feature>
<feature type="transmembrane region" description="Helical" evidence="1">
    <location>
        <begin position="300"/>
        <end position="320"/>
    </location>
</feature>
<feature type="transmembrane region" description="Helical" evidence="1">
    <location>
        <begin position="322"/>
        <end position="342"/>
    </location>
</feature>
<feature type="transmembrane region" description="Helical" evidence="1">
    <location>
        <begin position="343"/>
        <end position="363"/>
    </location>
</feature>
<feature type="transmembrane region" description="Helical" evidence="1">
    <location>
        <begin position="371"/>
        <end position="391"/>
    </location>
</feature>
<protein>
    <recommendedName>
        <fullName evidence="1">Putative ion-transport protein YfeO</fullName>
    </recommendedName>
</protein>
<evidence type="ECO:0000255" key="1">
    <source>
        <dbReference type="HAMAP-Rule" id="MF_01115"/>
    </source>
</evidence>
<sequence length="418" mass="43574">MLHPRARTMLLLSLPAVAIGIASSLILIVVMKIASVLQNLLWQRLPGTLGIAQDSPLWIIGVLTLTGIAVGLVIRFSQGHAGPDPACEPLIGAPVPPSALPGLIVALILGLAGGVSLGPEHPIMTVNIALAVAIGARLLPRVNRMEWTILASAGTIGALFGTPVAAALIFSQTLNGSSEVPLWDRLFAPLMAAAAGALTTGLFFHPHFSLPIAHYGQMEMTDILSGAIVAAIAIAAGMVAVWCLPRLHAMMHQMKNPVLVLGIGGFILGILGVIGGPVSLFKGLDEMQQMVANQAFSTSDYFLLAVIKLAALVVAAASGFRGGRIFPAVFVGVALGLMLHEHVPAVPAAITVSCAILGIVLVVTRDGWLSLFMAAVVVPNTTLLPLLCIVMLPAWLLLAGKPMMMVNRPKQQPPHDNV</sequence>
<reference key="1">
    <citation type="journal article" date="2011" name="Proc. Natl. Acad. Sci. U.S.A.">
        <title>Genomic anatomy of Escherichia coli O157:H7 outbreaks.</title>
        <authorList>
            <person name="Eppinger M."/>
            <person name="Mammel M.K."/>
            <person name="Leclerc J.E."/>
            <person name="Ravel J."/>
            <person name="Cebula T.A."/>
        </authorList>
    </citation>
    <scope>NUCLEOTIDE SEQUENCE [LARGE SCALE GENOMIC DNA]</scope>
    <source>
        <strain>EC4115 / EHEC</strain>
    </source>
</reference>
<gene>
    <name evidence="1" type="primary">yfeO</name>
    <name type="ordered locus">ECH74115_3621</name>
</gene>
<organism>
    <name type="scientific">Escherichia coli O157:H7 (strain EC4115 / EHEC)</name>
    <dbReference type="NCBI Taxonomy" id="444450"/>
    <lineage>
        <taxon>Bacteria</taxon>
        <taxon>Pseudomonadati</taxon>
        <taxon>Pseudomonadota</taxon>
        <taxon>Gammaproteobacteria</taxon>
        <taxon>Enterobacterales</taxon>
        <taxon>Enterobacteriaceae</taxon>
        <taxon>Escherichia</taxon>
    </lineage>
</organism>
<dbReference type="EMBL" id="CP001164">
    <property type="protein sequence ID" value="ACI35931.1"/>
    <property type="molecule type" value="Genomic_DNA"/>
</dbReference>
<dbReference type="RefSeq" id="WP_000903148.1">
    <property type="nucleotide sequence ID" value="NC_011353.1"/>
</dbReference>
<dbReference type="SMR" id="B5YZU3"/>
<dbReference type="KEGG" id="ecf:ECH74115_3621"/>
<dbReference type="HOGENOM" id="CLU_053130_0_0_6"/>
<dbReference type="GO" id="GO:0005886">
    <property type="term" value="C:plasma membrane"/>
    <property type="evidence" value="ECO:0007669"/>
    <property type="project" value="UniProtKB-SubCell"/>
</dbReference>
<dbReference type="GO" id="GO:0015108">
    <property type="term" value="F:chloride transmembrane transporter activity"/>
    <property type="evidence" value="ECO:0007669"/>
    <property type="project" value="InterPro"/>
</dbReference>
<dbReference type="GO" id="GO:0005216">
    <property type="term" value="F:monoatomic ion channel activity"/>
    <property type="evidence" value="ECO:0007669"/>
    <property type="project" value="UniProtKB-UniRule"/>
</dbReference>
<dbReference type="CDD" id="cd00400">
    <property type="entry name" value="Voltage_gated_ClC"/>
    <property type="match status" value="1"/>
</dbReference>
<dbReference type="FunFam" id="1.10.3080.10:FF:000007">
    <property type="entry name" value="Putative ion-transport protein YfeO"/>
    <property type="match status" value="1"/>
</dbReference>
<dbReference type="Gene3D" id="1.10.3080.10">
    <property type="entry name" value="Clc chloride channel"/>
    <property type="match status" value="1"/>
</dbReference>
<dbReference type="HAMAP" id="MF_01115">
    <property type="entry name" value="CLC_YfeO"/>
    <property type="match status" value="1"/>
</dbReference>
<dbReference type="InterPro" id="IPR022969">
    <property type="entry name" value="Chloride_channel_YfeO"/>
</dbReference>
<dbReference type="InterPro" id="IPR014743">
    <property type="entry name" value="Cl-channel_core"/>
</dbReference>
<dbReference type="InterPro" id="IPR001807">
    <property type="entry name" value="ClC"/>
</dbReference>
<dbReference type="InterPro" id="IPR050368">
    <property type="entry name" value="ClC-type_chloride_channel"/>
</dbReference>
<dbReference type="NCBIfam" id="NF002971">
    <property type="entry name" value="PRK03655.1"/>
    <property type="match status" value="1"/>
</dbReference>
<dbReference type="PANTHER" id="PTHR43427">
    <property type="entry name" value="CHLORIDE CHANNEL PROTEIN CLC-E"/>
    <property type="match status" value="1"/>
</dbReference>
<dbReference type="PANTHER" id="PTHR43427:SF9">
    <property type="entry name" value="ION-TRANSPORT PROTEIN YFEO-RELATED"/>
    <property type="match status" value="1"/>
</dbReference>
<dbReference type="Pfam" id="PF00654">
    <property type="entry name" value="Voltage_CLC"/>
    <property type="match status" value="1"/>
</dbReference>
<dbReference type="PRINTS" id="PR00762">
    <property type="entry name" value="CLCHANNEL"/>
</dbReference>
<dbReference type="SUPFAM" id="SSF81340">
    <property type="entry name" value="Clc chloride channel"/>
    <property type="match status" value="1"/>
</dbReference>
<accession>B5YZU3</accession>
<comment type="subcellular location">
    <subcellularLocation>
        <location evidence="1">Cell membrane</location>
        <topology evidence="1">Multi-pass membrane protein</topology>
    </subcellularLocation>
</comment>
<comment type="similarity">
    <text evidence="1">Belongs to the chloride channel (TC 2.A.49) family.</text>
</comment>
<proteinExistence type="inferred from homology"/>
<name>YFEO_ECO5E</name>